<keyword id="KW-0963">Cytoplasm</keyword>
<keyword id="KW-1185">Reference proteome</keyword>
<keyword id="KW-0810">Translation regulation</keyword>
<name>HPF_STACT</name>
<organism>
    <name type="scientific">Staphylococcus carnosus (strain TM300)</name>
    <dbReference type="NCBI Taxonomy" id="396513"/>
    <lineage>
        <taxon>Bacteria</taxon>
        <taxon>Bacillati</taxon>
        <taxon>Bacillota</taxon>
        <taxon>Bacilli</taxon>
        <taxon>Bacillales</taxon>
        <taxon>Staphylococcaceae</taxon>
        <taxon>Staphylococcus</taxon>
    </lineage>
</organism>
<evidence type="ECO:0000255" key="1">
    <source>
        <dbReference type="HAMAP-Rule" id="MF_00839"/>
    </source>
</evidence>
<evidence type="ECO:0000256" key="2">
    <source>
        <dbReference type="SAM" id="MobiDB-lite"/>
    </source>
</evidence>
<evidence type="ECO:0000305" key="3"/>
<comment type="function">
    <text evidence="1">Required for dimerization of active 70S ribosomes into 100S ribosomes in stationary phase; 100S ribosomes are translationally inactive and sometimes present during exponential growth.</text>
</comment>
<comment type="subunit">
    <text evidence="1">Interacts with 100S ribosomes.</text>
</comment>
<comment type="subcellular location">
    <subcellularLocation>
        <location evidence="1">Cytoplasm</location>
    </subcellularLocation>
</comment>
<comment type="similarity">
    <text evidence="1">Belongs to the HPF/YfiA ribosome-associated protein family. Long HPF subfamily.</text>
</comment>
<comment type="sequence caution" evidence="3">
    <conflict type="frameshift">
        <sequence resource="EMBL-CDS" id="CAA56161"/>
    </conflict>
</comment>
<feature type="chain" id="PRO_0000208591" description="Ribosome hibernation promotion factor">
    <location>
        <begin position="1"/>
        <end position="188"/>
    </location>
</feature>
<feature type="region of interest" description="Disordered" evidence="2">
    <location>
        <begin position="93"/>
        <end position="125"/>
    </location>
</feature>
<feature type="sequence conflict" description="In Ref. 2; CAA56161." evidence="3" ref="2">
    <location>
        <position position="52"/>
    </location>
</feature>
<feature type="sequence conflict" description="In Ref. 2; CAA56161." evidence="3" ref="2">
    <original>L</original>
    <variation>I</variation>
    <location>
        <position position="74"/>
    </location>
</feature>
<feature type="sequence conflict" description="In Ref. 2; CAA56161." evidence="3" ref="2">
    <original>L</original>
    <variation>K</variation>
    <location>
        <position position="80"/>
    </location>
</feature>
<feature type="sequence conflict" description="In Ref. 2; CAA56161." evidence="3" ref="2">
    <original>R</original>
    <variation>C</variation>
    <location>
        <position position="87"/>
    </location>
</feature>
<feature type="sequence conflict" description="In Ref. 2; CAA56161." evidence="3" ref="2">
    <original>H</original>
    <variation>T</variation>
    <location>
        <position position="156"/>
    </location>
</feature>
<feature type="sequence conflict" description="In Ref. 2; CAA56161." evidence="3" ref="2">
    <original>N</original>
    <variation>KLICDI</variation>
    <location>
        <position position="188"/>
    </location>
</feature>
<reference key="1">
    <citation type="journal article" date="2009" name="Appl. Environ. Microbiol.">
        <title>Genome analysis of the meat starter culture bacterium Staphylococcus carnosus TM300.</title>
        <authorList>
            <person name="Rosenstein R."/>
            <person name="Nerz C."/>
            <person name="Biswas L."/>
            <person name="Resch A."/>
            <person name="Raddatz G."/>
            <person name="Schuster S.C."/>
            <person name="Goetz F."/>
        </authorList>
    </citation>
    <scope>NUCLEOTIDE SEQUENCE [LARGE SCALE GENOMIC DNA]</scope>
    <source>
        <strain>TM300</strain>
    </source>
</reference>
<reference key="2">
    <citation type="journal article" date="1995" name="FEMS Microbiol. Lett.">
        <title>Functional characterization of the Staphylococcus carnosus SecA protein in Escherichia coli and Bacillus subtilis secA mutant strains.</title>
        <authorList>
            <person name="Klein M."/>
            <person name="Meens J."/>
            <person name="Freudl R."/>
        </authorList>
    </citation>
    <scope>NUCLEOTIDE SEQUENCE [GENOMIC DNA] OF 28-188</scope>
</reference>
<accession>P47995</accession>
<accession>B9DJM1</accession>
<sequence>MIRFEIHGDNLTITDAIRNYIEDKVGKLERYFTNVPNVNAHVKVKTYANSSTKIEVTIPLNDVTLRAEERNDDLYAGIDLITNKLERQVRKYKTRVNRKKRKESEHEPFPATPETPPETAVDHDKDDEIEIIRSKQFSLKPMDSEEAVLQMDLLGHDFFIFNDRETDGTSIVYRRKDGKYGLIETVEN</sequence>
<gene>
    <name evidence="1" type="primary">hpf</name>
    <name type="ordered locus">Sca_0400</name>
</gene>
<dbReference type="EMBL" id="AM295250">
    <property type="protein sequence ID" value="CAL27314.1"/>
    <property type="molecule type" value="Genomic_DNA"/>
</dbReference>
<dbReference type="EMBL" id="X79725">
    <property type="protein sequence ID" value="CAA56161.1"/>
    <property type="status" value="ALT_FRAME"/>
    <property type="molecule type" value="Genomic_DNA"/>
</dbReference>
<dbReference type="PIR" id="S47148">
    <property type="entry name" value="S47148"/>
</dbReference>
<dbReference type="RefSeq" id="WP_015899659.1">
    <property type="nucleotide sequence ID" value="NC_012121.1"/>
</dbReference>
<dbReference type="SMR" id="P47995"/>
<dbReference type="GeneID" id="93795330"/>
<dbReference type="KEGG" id="sca:SCA_0400"/>
<dbReference type="eggNOG" id="COG1544">
    <property type="taxonomic scope" value="Bacteria"/>
</dbReference>
<dbReference type="HOGENOM" id="CLU_071472_0_3_9"/>
<dbReference type="OrthoDB" id="9794975at2"/>
<dbReference type="BioCyc" id="SCAR396513:SCA_RS02040-MONOMER"/>
<dbReference type="Proteomes" id="UP000000444">
    <property type="component" value="Chromosome"/>
</dbReference>
<dbReference type="GO" id="GO:0022627">
    <property type="term" value="C:cytosolic small ribosomal subunit"/>
    <property type="evidence" value="ECO:0007669"/>
    <property type="project" value="TreeGrafter"/>
</dbReference>
<dbReference type="GO" id="GO:0043024">
    <property type="term" value="F:ribosomal small subunit binding"/>
    <property type="evidence" value="ECO:0007669"/>
    <property type="project" value="TreeGrafter"/>
</dbReference>
<dbReference type="GO" id="GO:0045900">
    <property type="term" value="P:negative regulation of translational elongation"/>
    <property type="evidence" value="ECO:0007669"/>
    <property type="project" value="TreeGrafter"/>
</dbReference>
<dbReference type="CDD" id="cd00552">
    <property type="entry name" value="RaiA"/>
    <property type="match status" value="1"/>
</dbReference>
<dbReference type="FunFam" id="3.30.505.50:FF:000001">
    <property type="entry name" value="Ribosome hibernation promoting factor"/>
    <property type="match status" value="1"/>
</dbReference>
<dbReference type="Gene3D" id="3.30.160.100">
    <property type="entry name" value="Ribosome hibernation promotion factor-like"/>
    <property type="match status" value="1"/>
</dbReference>
<dbReference type="Gene3D" id="3.30.505.50">
    <property type="entry name" value="Sigma 54 modulation/S30EA ribosomal protein, C-terminal domain"/>
    <property type="match status" value="1"/>
</dbReference>
<dbReference type="HAMAP" id="MF_00839">
    <property type="entry name" value="HPF"/>
    <property type="match status" value="1"/>
</dbReference>
<dbReference type="InterPro" id="IPR050574">
    <property type="entry name" value="HPF/YfiA_ribosome-assoc"/>
</dbReference>
<dbReference type="InterPro" id="IPR034694">
    <property type="entry name" value="HPF_long/plastid"/>
</dbReference>
<dbReference type="InterPro" id="IPR036567">
    <property type="entry name" value="RHF-like"/>
</dbReference>
<dbReference type="InterPro" id="IPR003489">
    <property type="entry name" value="RHF/RaiA"/>
</dbReference>
<dbReference type="InterPro" id="IPR032528">
    <property type="entry name" value="Ribosom_S30AE_C"/>
</dbReference>
<dbReference type="InterPro" id="IPR038416">
    <property type="entry name" value="Ribosom_S30AE_C_sf"/>
</dbReference>
<dbReference type="NCBIfam" id="TIGR00741">
    <property type="entry name" value="yfiA"/>
    <property type="match status" value="1"/>
</dbReference>
<dbReference type="PANTHER" id="PTHR33231">
    <property type="entry name" value="30S RIBOSOMAL PROTEIN"/>
    <property type="match status" value="1"/>
</dbReference>
<dbReference type="PANTHER" id="PTHR33231:SF1">
    <property type="entry name" value="30S RIBOSOMAL PROTEIN"/>
    <property type="match status" value="1"/>
</dbReference>
<dbReference type="Pfam" id="PF16321">
    <property type="entry name" value="Ribosom_S30AE_C"/>
    <property type="match status" value="1"/>
</dbReference>
<dbReference type="Pfam" id="PF02482">
    <property type="entry name" value="Ribosomal_S30AE"/>
    <property type="match status" value="1"/>
</dbReference>
<dbReference type="SUPFAM" id="SSF69754">
    <property type="entry name" value="Ribosome binding protein Y (YfiA homologue)"/>
    <property type="match status" value="1"/>
</dbReference>
<proteinExistence type="inferred from homology"/>
<protein>
    <recommendedName>
        <fullName evidence="1">Ribosome hibernation promotion factor</fullName>
        <shortName evidence="1">HPF</shortName>
    </recommendedName>
</protein>